<name>WDR55_DICDI</name>
<organism>
    <name type="scientific">Dictyostelium discoideum</name>
    <name type="common">Social amoeba</name>
    <dbReference type="NCBI Taxonomy" id="44689"/>
    <lineage>
        <taxon>Eukaryota</taxon>
        <taxon>Amoebozoa</taxon>
        <taxon>Evosea</taxon>
        <taxon>Eumycetozoa</taxon>
        <taxon>Dictyostelia</taxon>
        <taxon>Dictyosteliales</taxon>
        <taxon>Dictyosteliaceae</taxon>
        <taxon>Dictyostelium</taxon>
    </lineage>
</organism>
<comment type="similarity">
    <text evidence="2">Belongs to the WD repeat WDR55 family.</text>
</comment>
<reference key="1">
    <citation type="journal article" date="2005" name="Nature">
        <title>The genome of the social amoeba Dictyostelium discoideum.</title>
        <authorList>
            <person name="Eichinger L."/>
            <person name="Pachebat J.A."/>
            <person name="Gloeckner G."/>
            <person name="Rajandream M.A."/>
            <person name="Sucgang R."/>
            <person name="Berriman M."/>
            <person name="Song J."/>
            <person name="Olsen R."/>
            <person name="Szafranski K."/>
            <person name="Xu Q."/>
            <person name="Tunggal B."/>
            <person name="Kummerfeld S."/>
            <person name="Madera M."/>
            <person name="Konfortov B.A."/>
            <person name="Rivero F."/>
            <person name="Bankier A.T."/>
            <person name="Lehmann R."/>
            <person name="Hamlin N."/>
            <person name="Davies R."/>
            <person name="Gaudet P."/>
            <person name="Fey P."/>
            <person name="Pilcher K."/>
            <person name="Chen G."/>
            <person name="Saunders D."/>
            <person name="Sodergren E.J."/>
            <person name="Davis P."/>
            <person name="Kerhornou A."/>
            <person name="Nie X."/>
            <person name="Hall N."/>
            <person name="Anjard C."/>
            <person name="Hemphill L."/>
            <person name="Bason N."/>
            <person name="Farbrother P."/>
            <person name="Desany B."/>
            <person name="Just E."/>
            <person name="Morio T."/>
            <person name="Rost R."/>
            <person name="Churcher C.M."/>
            <person name="Cooper J."/>
            <person name="Haydock S."/>
            <person name="van Driessche N."/>
            <person name="Cronin A."/>
            <person name="Goodhead I."/>
            <person name="Muzny D.M."/>
            <person name="Mourier T."/>
            <person name="Pain A."/>
            <person name="Lu M."/>
            <person name="Harper D."/>
            <person name="Lindsay R."/>
            <person name="Hauser H."/>
            <person name="James K.D."/>
            <person name="Quiles M."/>
            <person name="Madan Babu M."/>
            <person name="Saito T."/>
            <person name="Buchrieser C."/>
            <person name="Wardroper A."/>
            <person name="Felder M."/>
            <person name="Thangavelu M."/>
            <person name="Johnson D."/>
            <person name="Knights A."/>
            <person name="Loulseged H."/>
            <person name="Mungall K.L."/>
            <person name="Oliver K."/>
            <person name="Price C."/>
            <person name="Quail M.A."/>
            <person name="Urushihara H."/>
            <person name="Hernandez J."/>
            <person name="Rabbinowitsch E."/>
            <person name="Steffen D."/>
            <person name="Sanders M."/>
            <person name="Ma J."/>
            <person name="Kohara Y."/>
            <person name="Sharp S."/>
            <person name="Simmonds M.N."/>
            <person name="Spiegler S."/>
            <person name="Tivey A."/>
            <person name="Sugano S."/>
            <person name="White B."/>
            <person name="Walker D."/>
            <person name="Woodward J.R."/>
            <person name="Winckler T."/>
            <person name="Tanaka Y."/>
            <person name="Shaulsky G."/>
            <person name="Schleicher M."/>
            <person name="Weinstock G.M."/>
            <person name="Rosenthal A."/>
            <person name="Cox E.C."/>
            <person name="Chisholm R.L."/>
            <person name="Gibbs R.A."/>
            <person name="Loomis W.F."/>
            <person name="Platzer M."/>
            <person name="Kay R.R."/>
            <person name="Williams J.G."/>
            <person name="Dear P.H."/>
            <person name="Noegel A.A."/>
            <person name="Barrell B.G."/>
            <person name="Kuspa A."/>
        </authorList>
    </citation>
    <scope>NUCLEOTIDE SEQUENCE [LARGE SCALE GENOMIC DNA]</scope>
    <source>
        <strain>AX4</strain>
    </source>
</reference>
<proteinExistence type="inferred from homology"/>
<sequence length="408" mass="46002">MDTSSEGDHELAPNDISFNTIPFSLNFHPTEDLLVVSDAEGRLKLFKYSLDENEVKLSLRPHQSGCRQANFSSDGKYIFTASSDCSMKVIDINTGSILYTREEAHDYPINCLVSKEFMVFTGDDEGTIKVWDMRQQNIVCEFQEHGDFISDITTIDDRHIAATSGDGGVSIYNFVRKSMDDISEKSDNELLSCLSLDNGQKLVCGSQDGSILIYDRNNLENVKKFAGHPQSVDALVKVNNNTFFSGSSDGIIRFIGLRPKKLLGVVGEHSTFPIERMAISRDNRYLGSISHDFSLKFWNVASFYEEDESEDADSANANANEIENDDDDDDDDDEIEDIENATKVDDDSGSEMGDDDDDDDDEEQEEEEESSSDEDIKRKKPQQNPIKAQQIEKQKQKQNQKRSFFKDL</sequence>
<accession>Q54SA5</accession>
<keyword id="KW-1185">Reference proteome</keyword>
<keyword id="KW-0677">Repeat</keyword>
<keyword id="KW-0853">WD repeat</keyword>
<gene>
    <name type="primary">wdr55</name>
    <name type="ORF">DDB_G0282573</name>
</gene>
<feature type="chain" id="PRO_0000373969" description="WD repeat-containing protein 55 homolog">
    <location>
        <begin position="1"/>
        <end position="408"/>
    </location>
</feature>
<feature type="repeat" description="WD 1">
    <location>
        <begin position="17"/>
        <end position="56"/>
    </location>
</feature>
<feature type="repeat" description="WD 2">
    <location>
        <begin position="61"/>
        <end position="100"/>
    </location>
</feature>
<feature type="repeat" description="WD 3">
    <location>
        <begin position="104"/>
        <end position="141"/>
    </location>
</feature>
<feature type="repeat" description="WD 4">
    <location>
        <begin position="144"/>
        <end position="183"/>
    </location>
</feature>
<feature type="repeat" description="WD 5">
    <location>
        <begin position="186"/>
        <end position="224"/>
    </location>
</feature>
<feature type="repeat" description="WD 6">
    <location>
        <begin position="227"/>
        <end position="265"/>
    </location>
</feature>
<feature type="repeat" description="WD 7">
    <location>
        <begin position="268"/>
        <end position="308"/>
    </location>
</feature>
<feature type="region of interest" description="Disordered" evidence="1">
    <location>
        <begin position="308"/>
        <end position="408"/>
    </location>
</feature>
<feature type="compositionally biased region" description="Acidic residues" evidence="1">
    <location>
        <begin position="322"/>
        <end position="339"/>
    </location>
</feature>
<feature type="compositionally biased region" description="Acidic residues" evidence="1">
    <location>
        <begin position="347"/>
        <end position="373"/>
    </location>
</feature>
<evidence type="ECO:0000256" key="1">
    <source>
        <dbReference type="SAM" id="MobiDB-lite"/>
    </source>
</evidence>
<evidence type="ECO:0000305" key="2"/>
<protein>
    <recommendedName>
        <fullName>WD repeat-containing protein 55 homolog</fullName>
    </recommendedName>
</protein>
<dbReference type="EMBL" id="AAFI02000047">
    <property type="protein sequence ID" value="EAL66146.1"/>
    <property type="molecule type" value="Genomic_DNA"/>
</dbReference>
<dbReference type="RefSeq" id="XP_640134.1">
    <property type="nucleotide sequence ID" value="XM_635042.1"/>
</dbReference>
<dbReference type="SMR" id="Q54SA5"/>
<dbReference type="FunCoup" id="Q54SA5">
    <property type="interactions" value="155"/>
</dbReference>
<dbReference type="STRING" id="44689.Q54SA5"/>
<dbReference type="PaxDb" id="44689-DDB0304577"/>
<dbReference type="EnsemblProtists" id="EAL66146">
    <property type="protein sequence ID" value="EAL66146"/>
    <property type="gene ID" value="DDB_G0282573"/>
</dbReference>
<dbReference type="GeneID" id="8623671"/>
<dbReference type="KEGG" id="ddi:DDB_G0282573"/>
<dbReference type="dictyBase" id="DDB_G0282573"/>
<dbReference type="VEuPathDB" id="AmoebaDB:DDB_G0282573"/>
<dbReference type="eggNOG" id="KOG2444">
    <property type="taxonomic scope" value="Eukaryota"/>
</dbReference>
<dbReference type="HOGENOM" id="CLU_035848_2_1_1"/>
<dbReference type="InParanoid" id="Q54SA5"/>
<dbReference type="OMA" id="QAIHPTE"/>
<dbReference type="PhylomeDB" id="Q54SA5"/>
<dbReference type="PRO" id="PR:Q54SA5"/>
<dbReference type="Proteomes" id="UP000002195">
    <property type="component" value="Chromosome 3"/>
</dbReference>
<dbReference type="Gene3D" id="2.130.10.10">
    <property type="entry name" value="YVTN repeat-like/Quinoprotein amine dehydrogenase"/>
    <property type="match status" value="2"/>
</dbReference>
<dbReference type="InterPro" id="IPR015943">
    <property type="entry name" value="WD40/YVTN_repeat-like_dom_sf"/>
</dbReference>
<dbReference type="InterPro" id="IPR036322">
    <property type="entry name" value="WD40_repeat_dom_sf"/>
</dbReference>
<dbReference type="InterPro" id="IPR001680">
    <property type="entry name" value="WD40_rpt"/>
</dbReference>
<dbReference type="InterPro" id="IPR050505">
    <property type="entry name" value="WDR55_POC1"/>
</dbReference>
<dbReference type="PANTHER" id="PTHR44019">
    <property type="entry name" value="WD REPEAT-CONTAINING PROTEIN 55"/>
    <property type="match status" value="1"/>
</dbReference>
<dbReference type="PANTHER" id="PTHR44019:SF20">
    <property type="entry name" value="WD REPEAT-CONTAINING PROTEIN 55"/>
    <property type="match status" value="1"/>
</dbReference>
<dbReference type="Pfam" id="PF24796">
    <property type="entry name" value="WDR55"/>
    <property type="match status" value="1"/>
</dbReference>
<dbReference type="SMART" id="SM00320">
    <property type="entry name" value="WD40"/>
    <property type="match status" value="7"/>
</dbReference>
<dbReference type="SUPFAM" id="SSF50978">
    <property type="entry name" value="WD40 repeat-like"/>
    <property type="match status" value="1"/>
</dbReference>
<dbReference type="PROSITE" id="PS00678">
    <property type="entry name" value="WD_REPEATS_1"/>
    <property type="match status" value="1"/>
</dbReference>
<dbReference type="PROSITE" id="PS50082">
    <property type="entry name" value="WD_REPEATS_2"/>
    <property type="match status" value="1"/>
</dbReference>
<dbReference type="PROSITE" id="PS50294">
    <property type="entry name" value="WD_REPEATS_REGION"/>
    <property type="match status" value="1"/>
</dbReference>